<protein>
    <recommendedName>
        <fullName>Zinc finger C2HC domain-containing protein 1A</fullName>
    </recommendedName>
</protein>
<keyword id="KW-0479">Metal-binding</keyword>
<keyword id="KW-1185">Reference proteome</keyword>
<keyword id="KW-0677">Repeat</keyword>
<keyword id="KW-0862">Zinc</keyword>
<keyword id="KW-0863">Zinc-finger</keyword>
<evidence type="ECO:0000255" key="1">
    <source>
        <dbReference type="PROSITE-ProRule" id="PRU01371"/>
    </source>
</evidence>
<evidence type="ECO:0000256" key="2">
    <source>
        <dbReference type="SAM" id="MobiDB-lite"/>
    </source>
</evidence>
<evidence type="ECO:0000305" key="3"/>
<sequence length="323" mass="35715">MEETEEELRPCKICGRTFFPATLKKHVPICQKTSVKKRKTFESSRQRAEGTDINTVKPVKPRPEPPKKQSNWKRKHEEFIATIRSAKGISQILKEGGELPPPPPPSYDPDYVQCPYCQRRFNQNAADRHINFCKEQSARMGQKIKGGTDPKRKPTVRPQYKPPSLKTDSPAAVSSPASRLPQPPNFGKPTSGIPSGKSVANSGAPGNKYQTQSPAHKNSTMVTSPQAGGALKARTPPSLVKNPSSGTSFNKRKTYNAENNARPEAAMGYDSSDYSKPLNDGHIRAADNNMSGQLTKFCHECGTKYPVEWAKFCCECGVRRMVL</sequence>
<name>ZC21A_XENLA</name>
<accession>Q5PPV5</accession>
<gene>
    <name type="primary">zc2hc1a</name>
    <name type="synonym">fam164a</name>
</gene>
<feature type="chain" id="PRO_0000280250" description="Zinc finger C2HC domain-containing protein 1A">
    <location>
        <begin position="1"/>
        <end position="323"/>
    </location>
</feature>
<feature type="zinc finger region" description="C2HC/C3H-type 1" evidence="1">
    <location>
        <begin position="7"/>
        <end position="36"/>
    </location>
</feature>
<feature type="zinc finger region" description="C2HC/C3H-type 2" evidence="1">
    <location>
        <begin position="110"/>
        <end position="139"/>
    </location>
</feature>
<feature type="region of interest" description="Disordered" evidence="2">
    <location>
        <begin position="35"/>
        <end position="75"/>
    </location>
</feature>
<feature type="region of interest" description="Disordered" evidence="2">
    <location>
        <begin position="138"/>
        <end position="273"/>
    </location>
</feature>
<feature type="compositionally biased region" description="Basic and acidic residues" evidence="2">
    <location>
        <begin position="40"/>
        <end position="50"/>
    </location>
</feature>
<feature type="compositionally biased region" description="Polar residues" evidence="2">
    <location>
        <begin position="208"/>
        <end position="226"/>
    </location>
</feature>
<feature type="binding site" evidence="1">
    <location>
        <position position="11"/>
    </location>
    <ligand>
        <name>Zn(2+)</name>
        <dbReference type="ChEBI" id="CHEBI:29105"/>
        <label>1</label>
    </ligand>
</feature>
<feature type="binding site" evidence="1">
    <location>
        <position position="14"/>
    </location>
    <ligand>
        <name>Zn(2+)</name>
        <dbReference type="ChEBI" id="CHEBI:29105"/>
        <label>1</label>
    </ligand>
</feature>
<feature type="binding site" evidence="1">
    <location>
        <position position="26"/>
    </location>
    <ligand>
        <name>Zn(2+)</name>
        <dbReference type="ChEBI" id="CHEBI:29105"/>
        <label>1</label>
    </ligand>
</feature>
<feature type="binding site" evidence="1">
    <location>
        <position position="30"/>
    </location>
    <ligand>
        <name>Zn(2+)</name>
        <dbReference type="ChEBI" id="CHEBI:29105"/>
        <label>1</label>
    </ligand>
</feature>
<feature type="binding site" evidence="1">
    <location>
        <position position="114"/>
    </location>
    <ligand>
        <name>Zn(2+)</name>
        <dbReference type="ChEBI" id="CHEBI:29105"/>
        <label>2</label>
    </ligand>
</feature>
<feature type="binding site" evidence="1">
    <location>
        <position position="117"/>
    </location>
    <ligand>
        <name>Zn(2+)</name>
        <dbReference type="ChEBI" id="CHEBI:29105"/>
        <label>2</label>
    </ligand>
</feature>
<feature type="binding site" evidence="1">
    <location>
        <position position="129"/>
    </location>
    <ligand>
        <name>Zn(2+)</name>
        <dbReference type="ChEBI" id="CHEBI:29105"/>
        <label>2</label>
    </ligand>
</feature>
<feature type="binding site" evidence="1">
    <location>
        <position position="133"/>
    </location>
    <ligand>
        <name>Zn(2+)</name>
        <dbReference type="ChEBI" id="CHEBI:29105"/>
        <label>2</label>
    </ligand>
</feature>
<organism>
    <name type="scientific">Xenopus laevis</name>
    <name type="common">African clawed frog</name>
    <dbReference type="NCBI Taxonomy" id="8355"/>
    <lineage>
        <taxon>Eukaryota</taxon>
        <taxon>Metazoa</taxon>
        <taxon>Chordata</taxon>
        <taxon>Craniata</taxon>
        <taxon>Vertebrata</taxon>
        <taxon>Euteleostomi</taxon>
        <taxon>Amphibia</taxon>
        <taxon>Batrachia</taxon>
        <taxon>Anura</taxon>
        <taxon>Pipoidea</taxon>
        <taxon>Pipidae</taxon>
        <taxon>Xenopodinae</taxon>
        <taxon>Xenopus</taxon>
        <taxon>Xenopus</taxon>
    </lineage>
</organism>
<reference key="1">
    <citation type="submission" date="2004-12" db="EMBL/GenBank/DDBJ databases">
        <authorList>
            <consortium name="NIH - Xenopus Gene Collection (XGC) project"/>
        </authorList>
    </citation>
    <scope>NUCLEOTIDE SEQUENCE [LARGE SCALE MRNA]</scope>
    <source>
        <tissue>Testis</tissue>
    </source>
</reference>
<proteinExistence type="evidence at transcript level"/>
<dbReference type="EMBL" id="BC087481">
    <property type="protein sequence ID" value="AAH87481.1"/>
    <property type="molecule type" value="mRNA"/>
</dbReference>
<dbReference type="RefSeq" id="NP_001088799.1">
    <property type="nucleotide sequence ID" value="NM_001095330.1"/>
</dbReference>
<dbReference type="DNASU" id="496067"/>
<dbReference type="GeneID" id="496067"/>
<dbReference type="KEGG" id="xla:496067"/>
<dbReference type="AGR" id="Xenbase:XB-GENE-954315"/>
<dbReference type="CTD" id="496067"/>
<dbReference type="Xenbase" id="XB-GENE-954315">
    <property type="gene designation" value="zc2hc1a.S"/>
</dbReference>
<dbReference type="OrthoDB" id="10066537at2759"/>
<dbReference type="Proteomes" id="UP000186698">
    <property type="component" value="Chromosome 6S"/>
</dbReference>
<dbReference type="Bgee" id="496067">
    <property type="expression patterns" value="Expressed in testis and 19 other cell types or tissues"/>
</dbReference>
<dbReference type="GO" id="GO:0008270">
    <property type="term" value="F:zinc ion binding"/>
    <property type="evidence" value="ECO:0007669"/>
    <property type="project" value="UniProtKB-KW"/>
</dbReference>
<dbReference type="Gene3D" id="3.30.160.60">
    <property type="entry name" value="Classic Zinc Finger"/>
    <property type="match status" value="1"/>
</dbReference>
<dbReference type="InterPro" id="IPR026319">
    <property type="entry name" value="ZC2HC1A/B-like"/>
</dbReference>
<dbReference type="InterPro" id="IPR049899">
    <property type="entry name" value="Znf_C2HC_C3H"/>
</dbReference>
<dbReference type="PANTHER" id="PTHR13555">
    <property type="entry name" value="C2H2 ZINC FINGER CGI-62-RELATED"/>
    <property type="match status" value="1"/>
</dbReference>
<dbReference type="PANTHER" id="PTHR13555:SF25">
    <property type="entry name" value="ZINC FINGER C2HC DOMAIN-CONTAINING PROTEIN 1A"/>
    <property type="match status" value="1"/>
</dbReference>
<dbReference type="Pfam" id="PF13913">
    <property type="entry name" value="zf-C2HC_2"/>
    <property type="match status" value="2"/>
</dbReference>
<dbReference type="PROSITE" id="PS52027">
    <property type="entry name" value="ZF_C2HC_C3H"/>
    <property type="match status" value="2"/>
</dbReference>
<comment type="cofactor">
    <cofactor evidence="1">
        <name>Zn(2+)</name>
        <dbReference type="ChEBI" id="CHEBI:29105"/>
    </cofactor>
</comment>
<comment type="similarity">
    <text evidence="3">Belongs to the ZC2HC1 family.</text>
</comment>